<gene>
    <name type="primary">vibC</name>
    <name type="ordered locus">VC_0773</name>
</gene>
<accession>O07898</accession>
<accession>Q9JQ09</accession>
<dbReference type="EC" id="5.4.4.2"/>
<dbReference type="EMBL" id="U52150">
    <property type="protein sequence ID" value="AAC45925.1"/>
    <property type="molecule type" value="Genomic_DNA"/>
</dbReference>
<dbReference type="EMBL" id="AE003852">
    <property type="protein sequence ID" value="AAF93938.1"/>
    <property type="molecule type" value="Genomic_DNA"/>
</dbReference>
<dbReference type="PIR" id="A82283">
    <property type="entry name" value="A82283"/>
</dbReference>
<dbReference type="RefSeq" id="NP_230422.1">
    <property type="nucleotide sequence ID" value="NC_002505.1"/>
</dbReference>
<dbReference type="RefSeq" id="WP_000245175.1">
    <property type="nucleotide sequence ID" value="NZ_LT906614.1"/>
</dbReference>
<dbReference type="SMR" id="O07898"/>
<dbReference type="STRING" id="243277.VC_0773"/>
<dbReference type="DNASU" id="2615316"/>
<dbReference type="EnsemblBacteria" id="AAF93938">
    <property type="protein sequence ID" value="AAF93938"/>
    <property type="gene ID" value="VC_0773"/>
</dbReference>
<dbReference type="KEGG" id="vch:VC_0773"/>
<dbReference type="PATRIC" id="fig|243277.26.peg.737"/>
<dbReference type="eggNOG" id="COG1169">
    <property type="taxonomic scope" value="Bacteria"/>
</dbReference>
<dbReference type="HOGENOM" id="CLU_006493_8_6_6"/>
<dbReference type="BioCyc" id="MetaCyc:VC0773-MONOMER"/>
<dbReference type="UniPathway" id="UPA00022"/>
<dbReference type="Proteomes" id="UP000000584">
    <property type="component" value="Chromosome 1"/>
</dbReference>
<dbReference type="GO" id="GO:0008909">
    <property type="term" value="F:isochorismate synthase activity"/>
    <property type="evidence" value="ECO:0007669"/>
    <property type="project" value="UniProtKB-EC"/>
</dbReference>
<dbReference type="GO" id="GO:0019537">
    <property type="term" value="P:vibriobactin biosynthetic process"/>
    <property type="evidence" value="ECO:0007669"/>
    <property type="project" value="UniProtKB-UniPathway"/>
</dbReference>
<dbReference type="Gene3D" id="3.60.120.10">
    <property type="entry name" value="Anthranilate synthase"/>
    <property type="match status" value="1"/>
</dbReference>
<dbReference type="InterPro" id="IPR005801">
    <property type="entry name" value="ADC_synthase"/>
</dbReference>
<dbReference type="InterPro" id="IPR015890">
    <property type="entry name" value="Chorismate_C"/>
</dbReference>
<dbReference type="InterPro" id="IPR004561">
    <property type="entry name" value="IsoChor_synthase"/>
</dbReference>
<dbReference type="NCBIfam" id="TIGR00543">
    <property type="entry name" value="isochor_syn"/>
    <property type="match status" value="1"/>
</dbReference>
<dbReference type="PANTHER" id="PTHR42839">
    <property type="entry name" value="ISOCHORISMATE SYNTHASE ENTC"/>
    <property type="match status" value="1"/>
</dbReference>
<dbReference type="PANTHER" id="PTHR42839:SF2">
    <property type="entry name" value="ISOCHORISMATE SYNTHASE ENTC"/>
    <property type="match status" value="1"/>
</dbReference>
<dbReference type="Pfam" id="PF00425">
    <property type="entry name" value="Chorismate_bind"/>
    <property type="match status" value="1"/>
</dbReference>
<dbReference type="SUPFAM" id="SSF56322">
    <property type="entry name" value="ADC synthase"/>
    <property type="match status" value="1"/>
</dbReference>
<reference key="1">
    <citation type="journal article" date="1997" name="J. Bacteriol.">
        <title>Cloning of a Vibrio cholerae vibriobactin gene cluster: identification of genes required for early steps in siderophore biosynthesis.</title>
        <authorList>
            <person name="Wyckoff E.E."/>
            <person name="Stoebner J.A."/>
            <person name="Reed K.E."/>
            <person name="Payne S.M."/>
        </authorList>
    </citation>
    <scope>NUCLEOTIDE SEQUENCE [GENOMIC DNA]</scope>
    <source>
        <strain>El Tor Lou15</strain>
    </source>
</reference>
<reference key="2">
    <citation type="journal article" date="2000" name="Nature">
        <title>DNA sequence of both chromosomes of the cholera pathogen Vibrio cholerae.</title>
        <authorList>
            <person name="Heidelberg J.F."/>
            <person name="Eisen J.A."/>
            <person name="Nelson W.C."/>
            <person name="Clayton R.A."/>
            <person name="Gwinn M.L."/>
            <person name="Dodson R.J."/>
            <person name="Haft D.H."/>
            <person name="Hickey E.K."/>
            <person name="Peterson J.D."/>
            <person name="Umayam L.A."/>
            <person name="Gill S.R."/>
            <person name="Nelson K.E."/>
            <person name="Read T.D."/>
            <person name="Tettelin H."/>
            <person name="Richardson D.L."/>
            <person name="Ermolaeva M.D."/>
            <person name="Vamathevan J.J."/>
            <person name="Bass S."/>
            <person name="Qin H."/>
            <person name="Dragoi I."/>
            <person name="Sellers P."/>
            <person name="McDonald L.A."/>
            <person name="Utterback T.R."/>
            <person name="Fleischmann R.D."/>
            <person name="Nierman W.C."/>
            <person name="White O."/>
            <person name="Salzberg S.L."/>
            <person name="Smith H.O."/>
            <person name="Colwell R.R."/>
            <person name="Mekalanos J.J."/>
            <person name="Venter J.C."/>
            <person name="Fraser C.M."/>
        </authorList>
    </citation>
    <scope>NUCLEOTIDE SEQUENCE [LARGE SCALE GENOMIC DNA]</scope>
    <source>
        <strain>ATCC 39315 / El Tor Inaba N16961</strain>
    </source>
</reference>
<protein>
    <recommendedName>
        <fullName>Vibriobactin-specific isochorismate synthase</fullName>
        <ecNumber>5.4.4.2</ecNumber>
    </recommendedName>
    <alternativeName>
        <fullName>Isochorismate mutase</fullName>
    </alternativeName>
</protein>
<name>VIBC_VIBCH</name>
<comment type="catalytic activity">
    <reaction>
        <text>chorismate = isochorismate</text>
        <dbReference type="Rhea" id="RHEA:18985"/>
        <dbReference type="ChEBI" id="CHEBI:29748"/>
        <dbReference type="ChEBI" id="CHEBI:29780"/>
        <dbReference type="EC" id="5.4.4.2"/>
    </reaction>
</comment>
<comment type="pathway">
    <text>Siderophore biosynthesis; vibriobactin biosynthesis.</text>
</comment>
<comment type="similarity">
    <text evidence="1">Belongs to the isochorismate synthase family.</text>
</comment>
<comment type="caution">
    <text evidence="1">It is uncertain whether Met-1 or Met-3 is the initiator.</text>
</comment>
<keyword id="KW-0413">Isomerase</keyword>
<keyword id="KW-1185">Reference proteome</keyword>
<organism>
    <name type="scientific">Vibrio cholerae serotype O1 (strain ATCC 39315 / El Tor Inaba N16961)</name>
    <dbReference type="NCBI Taxonomy" id="243277"/>
    <lineage>
        <taxon>Bacteria</taxon>
        <taxon>Pseudomonadati</taxon>
        <taxon>Pseudomonadota</taxon>
        <taxon>Gammaproteobacteria</taxon>
        <taxon>Vibrionales</taxon>
        <taxon>Vibrionaceae</taxon>
        <taxon>Vibrio</taxon>
    </lineage>
</organism>
<proteinExistence type="inferred from homology"/>
<feature type="chain" id="PRO_0000154152" description="Vibriobactin-specific isochorismate synthase">
    <location>
        <begin position="1"/>
        <end position="395"/>
    </location>
</feature>
<evidence type="ECO:0000305" key="1"/>
<sequence length="395" mass="43594">MVMKREVVGYTTMSEHLIDTQLTRSPFFFASANQSMLGCGVAHAFQQAIPFAELANQAKQLLQQAKRDECDNPLLFGIVPFDPKTPTRFMIPRTLYVSSSPRLNRPAHLTRQVAKLISSPSGEQYKQGVSHLLNMFHHSGLSKVVLSRAIEIATEQEIALPTLLRSLLAINHHGYTFAASLDEQRKLIGASPELLVAKRGNYLISNPLAGSRPRSQDAQENAQRRASLLNTAKDLHEHGLVVEEVERIMSRYCRNLYTPMVPSVIETETMLHLSTLLEGQVSDPEVCALQVAADLHPTPAVCGFPRESAYQAIRELEEFDRGYFTGMVGWCDARGNGEWVVTIRCAEVGSHQMKLFAGAGIVDESLPQSELEETGAKMKTILAAAGIELNDVLTA</sequence>